<reference key="1">
    <citation type="journal article" date="2002" name="DNA Res.">
        <title>Complete genomic sequence of nitrogen-fixing symbiotic bacterium Bradyrhizobium japonicum USDA110.</title>
        <authorList>
            <person name="Kaneko T."/>
            <person name="Nakamura Y."/>
            <person name="Sato S."/>
            <person name="Minamisawa K."/>
            <person name="Uchiumi T."/>
            <person name="Sasamoto S."/>
            <person name="Watanabe A."/>
            <person name="Idesawa K."/>
            <person name="Iriguchi M."/>
            <person name="Kawashima K."/>
            <person name="Kohara M."/>
            <person name="Matsumoto M."/>
            <person name="Shimpo S."/>
            <person name="Tsuruoka H."/>
            <person name="Wada T."/>
            <person name="Yamada M."/>
            <person name="Tabata S."/>
        </authorList>
    </citation>
    <scope>NUCLEOTIDE SEQUENCE [LARGE SCALE GENOMIC DNA]</scope>
    <source>
        <strain>JCM 10833 / BCRC 13528 / IAM 13628 / NBRC 14792 / USDA 110</strain>
    </source>
</reference>
<dbReference type="EC" id="3.1.3.5" evidence="1"/>
<dbReference type="EMBL" id="BA000040">
    <property type="protein sequence ID" value="BAC50011.1"/>
    <property type="status" value="ALT_INIT"/>
    <property type="molecule type" value="Genomic_DNA"/>
</dbReference>
<dbReference type="RefSeq" id="NP_771386.1">
    <property type="nucleotide sequence ID" value="NC_004463.1"/>
</dbReference>
<dbReference type="RefSeq" id="WP_028171844.1">
    <property type="nucleotide sequence ID" value="NC_004463.1"/>
</dbReference>
<dbReference type="SMR" id="Q89L02"/>
<dbReference type="FunCoup" id="Q89L02">
    <property type="interactions" value="252"/>
</dbReference>
<dbReference type="STRING" id="224911.AAV28_21020"/>
<dbReference type="EnsemblBacteria" id="BAC50011">
    <property type="protein sequence ID" value="BAC50011"/>
    <property type="gene ID" value="BAC50011"/>
</dbReference>
<dbReference type="GeneID" id="46491753"/>
<dbReference type="KEGG" id="bja:bll4746"/>
<dbReference type="PATRIC" id="fig|224911.44.peg.4579"/>
<dbReference type="eggNOG" id="COG0496">
    <property type="taxonomic scope" value="Bacteria"/>
</dbReference>
<dbReference type="HOGENOM" id="CLU_045192_1_2_5"/>
<dbReference type="InParanoid" id="Q89L02"/>
<dbReference type="OrthoDB" id="9780815at2"/>
<dbReference type="Proteomes" id="UP000002526">
    <property type="component" value="Chromosome"/>
</dbReference>
<dbReference type="GO" id="GO:0005737">
    <property type="term" value="C:cytoplasm"/>
    <property type="evidence" value="ECO:0007669"/>
    <property type="project" value="UniProtKB-SubCell"/>
</dbReference>
<dbReference type="GO" id="GO:0008254">
    <property type="term" value="F:3'-nucleotidase activity"/>
    <property type="evidence" value="ECO:0000318"/>
    <property type="project" value="GO_Central"/>
</dbReference>
<dbReference type="GO" id="GO:0008253">
    <property type="term" value="F:5'-nucleotidase activity"/>
    <property type="evidence" value="ECO:0000318"/>
    <property type="project" value="GO_Central"/>
</dbReference>
<dbReference type="GO" id="GO:0004309">
    <property type="term" value="F:exopolyphosphatase activity"/>
    <property type="evidence" value="ECO:0000318"/>
    <property type="project" value="GO_Central"/>
</dbReference>
<dbReference type="GO" id="GO:0046872">
    <property type="term" value="F:metal ion binding"/>
    <property type="evidence" value="ECO:0007669"/>
    <property type="project" value="UniProtKB-UniRule"/>
</dbReference>
<dbReference type="GO" id="GO:0000166">
    <property type="term" value="F:nucleotide binding"/>
    <property type="evidence" value="ECO:0007669"/>
    <property type="project" value="UniProtKB-KW"/>
</dbReference>
<dbReference type="FunFam" id="3.40.1210.10:FF:000001">
    <property type="entry name" value="5'/3'-nucleotidase SurE"/>
    <property type="match status" value="1"/>
</dbReference>
<dbReference type="Gene3D" id="3.40.1210.10">
    <property type="entry name" value="Survival protein SurE-like phosphatase/nucleotidase"/>
    <property type="match status" value="1"/>
</dbReference>
<dbReference type="HAMAP" id="MF_00060">
    <property type="entry name" value="SurE"/>
    <property type="match status" value="1"/>
</dbReference>
<dbReference type="InterPro" id="IPR030048">
    <property type="entry name" value="SurE"/>
</dbReference>
<dbReference type="InterPro" id="IPR002828">
    <property type="entry name" value="SurE-like_Pase/nucleotidase"/>
</dbReference>
<dbReference type="InterPro" id="IPR036523">
    <property type="entry name" value="SurE-like_sf"/>
</dbReference>
<dbReference type="NCBIfam" id="NF001490">
    <property type="entry name" value="PRK00346.1-4"/>
    <property type="match status" value="1"/>
</dbReference>
<dbReference type="NCBIfam" id="TIGR00087">
    <property type="entry name" value="surE"/>
    <property type="match status" value="1"/>
</dbReference>
<dbReference type="PANTHER" id="PTHR30457">
    <property type="entry name" value="5'-NUCLEOTIDASE SURE"/>
    <property type="match status" value="1"/>
</dbReference>
<dbReference type="PANTHER" id="PTHR30457:SF12">
    <property type="entry name" value="5'_3'-NUCLEOTIDASE SURE"/>
    <property type="match status" value="1"/>
</dbReference>
<dbReference type="Pfam" id="PF01975">
    <property type="entry name" value="SurE"/>
    <property type="match status" value="1"/>
</dbReference>
<dbReference type="SUPFAM" id="SSF64167">
    <property type="entry name" value="SurE-like"/>
    <property type="match status" value="1"/>
</dbReference>
<protein>
    <recommendedName>
        <fullName evidence="1">5'-nucleotidase SurE</fullName>
        <ecNumber evidence="1">3.1.3.5</ecNumber>
    </recommendedName>
    <alternativeName>
        <fullName evidence="1">Nucleoside 5'-monophosphate phosphohydrolase</fullName>
    </alternativeName>
</protein>
<comment type="function">
    <text evidence="1">Nucleotidase that shows phosphatase activity on nucleoside 5'-monophosphates.</text>
</comment>
<comment type="catalytic activity">
    <reaction evidence="1">
        <text>a ribonucleoside 5'-phosphate + H2O = a ribonucleoside + phosphate</text>
        <dbReference type="Rhea" id="RHEA:12484"/>
        <dbReference type="ChEBI" id="CHEBI:15377"/>
        <dbReference type="ChEBI" id="CHEBI:18254"/>
        <dbReference type="ChEBI" id="CHEBI:43474"/>
        <dbReference type="ChEBI" id="CHEBI:58043"/>
        <dbReference type="EC" id="3.1.3.5"/>
    </reaction>
</comment>
<comment type="cofactor">
    <cofactor evidence="1">
        <name>a divalent metal cation</name>
        <dbReference type="ChEBI" id="CHEBI:60240"/>
    </cofactor>
    <text evidence="1">Binds 1 divalent metal cation per subunit.</text>
</comment>
<comment type="subcellular location">
    <subcellularLocation>
        <location evidence="1">Cytoplasm</location>
    </subcellularLocation>
</comment>
<comment type="similarity">
    <text evidence="1">Belongs to the SurE nucleotidase family.</text>
</comment>
<comment type="sequence caution" evidence="2">
    <conflict type="erroneous initiation">
        <sequence resource="EMBL-CDS" id="BAC50011"/>
    </conflict>
</comment>
<sequence>MRILCTNDDGIHAPGLKVVEEIARALSDDVWVVAPELDQSGVSHSLSLNDPLRLREVGPRHFAVRGTPTDCVIMGARHILGTKPPDLVLSGVNKGRNVAEDVVYSGTIAGALEGTILGLPSFALSQEFSVETRERPPWDTARTFGPDILRKVMAAGIPKETVINVNFPSCAPEDVLGIRVTRQGKRNLGFLRIDERRDGRNNPYFWIGFERAAMMDTPAEGTDLAALRERYVSVTPLRLDRTNEAFSEALGAALK</sequence>
<organism>
    <name type="scientific">Bradyrhizobium diazoefficiens (strain JCM 10833 / BCRC 13528 / IAM 13628 / NBRC 14792 / USDA 110)</name>
    <dbReference type="NCBI Taxonomy" id="224911"/>
    <lineage>
        <taxon>Bacteria</taxon>
        <taxon>Pseudomonadati</taxon>
        <taxon>Pseudomonadota</taxon>
        <taxon>Alphaproteobacteria</taxon>
        <taxon>Hyphomicrobiales</taxon>
        <taxon>Nitrobacteraceae</taxon>
        <taxon>Bradyrhizobium</taxon>
    </lineage>
</organism>
<gene>
    <name evidence="1" type="primary">surE</name>
    <name type="ordered locus">bll4746</name>
</gene>
<keyword id="KW-0963">Cytoplasm</keyword>
<keyword id="KW-0378">Hydrolase</keyword>
<keyword id="KW-0479">Metal-binding</keyword>
<keyword id="KW-0547">Nucleotide-binding</keyword>
<keyword id="KW-1185">Reference proteome</keyword>
<proteinExistence type="inferred from homology"/>
<feature type="chain" id="PRO_0000111793" description="5'-nucleotidase SurE">
    <location>
        <begin position="1"/>
        <end position="255"/>
    </location>
</feature>
<feature type="binding site" evidence="1">
    <location>
        <position position="8"/>
    </location>
    <ligand>
        <name>a divalent metal cation</name>
        <dbReference type="ChEBI" id="CHEBI:60240"/>
    </ligand>
</feature>
<feature type="binding site" evidence="1">
    <location>
        <position position="9"/>
    </location>
    <ligand>
        <name>a divalent metal cation</name>
        <dbReference type="ChEBI" id="CHEBI:60240"/>
    </ligand>
</feature>
<feature type="binding site" evidence="1">
    <location>
        <position position="40"/>
    </location>
    <ligand>
        <name>a divalent metal cation</name>
        <dbReference type="ChEBI" id="CHEBI:60240"/>
    </ligand>
</feature>
<feature type="binding site" evidence="1">
    <location>
        <position position="93"/>
    </location>
    <ligand>
        <name>a divalent metal cation</name>
        <dbReference type="ChEBI" id="CHEBI:60240"/>
    </ligand>
</feature>
<accession>Q89L02</accession>
<name>SURE_BRADU</name>
<evidence type="ECO:0000255" key="1">
    <source>
        <dbReference type="HAMAP-Rule" id="MF_00060"/>
    </source>
</evidence>
<evidence type="ECO:0000305" key="2"/>